<keyword id="KW-0028">Amino-acid biosynthesis</keyword>
<keyword id="KW-0963">Cytoplasm</keyword>
<keyword id="KW-0413">Isomerase</keyword>
<keyword id="KW-0457">Lysine biosynthesis</keyword>
<keyword id="KW-1185">Reference proteome</keyword>
<gene>
    <name evidence="1" type="primary">dapF</name>
    <name type="ordered locus">ESA_03749</name>
</gene>
<accession>A7MQK2</accession>
<comment type="function">
    <text evidence="1">Catalyzes the stereoinversion of LL-2,6-diaminopimelate (L,L-DAP) to meso-diaminopimelate (meso-DAP), a precursor of L-lysine and an essential component of the bacterial peptidoglycan.</text>
</comment>
<comment type="catalytic activity">
    <reaction evidence="1">
        <text>(2S,6S)-2,6-diaminopimelate = meso-2,6-diaminopimelate</text>
        <dbReference type="Rhea" id="RHEA:15393"/>
        <dbReference type="ChEBI" id="CHEBI:57609"/>
        <dbReference type="ChEBI" id="CHEBI:57791"/>
        <dbReference type="EC" id="5.1.1.7"/>
    </reaction>
</comment>
<comment type="pathway">
    <text evidence="1">Amino-acid biosynthesis; L-lysine biosynthesis via DAP pathway; DL-2,6-diaminopimelate from LL-2,6-diaminopimelate: step 1/1.</text>
</comment>
<comment type="subunit">
    <text evidence="1">Homodimer.</text>
</comment>
<comment type="subcellular location">
    <subcellularLocation>
        <location evidence="1">Cytoplasm</location>
    </subcellularLocation>
</comment>
<comment type="similarity">
    <text evidence="1">Belongs to the diaminopimelate epimerase family.</text>
</comment>
<name>DAPF_CROS8</name>
<evidence type="ECO:0000255" key="1">
    <source>
        <dbReference type="HAMAP-Rule" id="MF_00197"/>
    </source>
</evidence>
<reference key="1">
    <citation type="journal article" date="2010" name="PLoS ONE">
        <title>Genome sequence of Cronobacter sakazakii BAA-894 and comparative genomic hybridization analysis with other Cronobacter species.</title>
        <authorList>
            <person name="Kucerova E."/>
            <person name="Clifton S.W."/>
            <person name="Xia X.Q."/>
            <person name="Long F."/>
            <person name="Porwollik S."/>
            <person name="Fulton L."/>
            <person name="Fronick C."/>
            <person name="Minx P."/>
            <person name="Kyung K."/>
            <person name="Warren W."/>
            <person name="Fulton R."/>
            <person name="Feng D."/>
            <person name="Wollam A."/>
            <person name="Shah N."/>
            <person name="Bhonagiri V."/>
            <person name="Nash W.E."/>
            <person name="Hallsworth-Pepin K."/>
            <person name="Wilson R.K."/>
            <person name="McClelland M."/>
            <person name="Forsythe S.J."/>
        </authorList>
    </citation>
    <scope>NUCLEOTIDE SEQUENCE [LARGE SCALE GENOMIC DNA]</scope>
    <source>
        <strain>ATCC BAA-894</strain>
    </source>
</reference>
<sequence>MQFSKMHGLGNDFMVVDAVTQNVFFSPDMIRRLADRHQGVGFDQLLVVEPPYDPDLDFHYRIFNADGSEVAQCGNGARCFARFVRLKGLTNKREIRVSTANGRMVLTVNEDEQVRVNMGEPVFEPSLVPFRANKAEKTYIMRAAEQTVLCGVVSMGNPHCVIQVDDVATAPVETLGPLMESHERFPERANIGFMQVMNTEHIRLRVFERGAGETQACGSGACGAVAVGIQQGLLAAQVRVDLPGGRLDIAWKGPGNPLFMTGPATHVYDGFIHL</sequence>
<dbReference type="EC" id="5.1.1.7" evidence="1"/>
<dbReference type="EMBL" id="CP000783">
    <property type="protein sequence ID" value="ABU78946.1"/>
    <property type="molecule type" value="Genomic_DNA"/>
</dbReference>
<dbReference type="RefSeq" id="WP_007780118.1">
    <property type="nucleotide sequence ID" value="NC_009778.1"/>
</dbReference>
<dbReference type="SMR" id="A7MQK2"/>
<dbReference type="GeneID" id="45717256"/>
<dbReference type="KEGG" id="esa:ESA_03749"/>
<dbReference type="HOGENOM" id="CLU_053306_1_1_6"/>
<dbReference type="UniPathway" id="UPA00034">
    <property type="reaction ID" value="UER00025"/>
</dbReference>
<dbReference type="Proteomes" id="UP000000260">
    <property type="component" value="Chromosome"/>
</dbReference>
<dbReference type="GO" id="GO:0005829">
    <property type="term" value="C:cytosol"/>
    <property type="evidence" value="ECO:0007669"/>
    <property type="project" value="TreeGrafter"/>
</dbReference>
<dbReference type="GO" id="GO:0008837">
    <property type="term" value="F:diaminopimelate epimerase activity"/>
    <property type="evidence" value="ECO:0007669"/>
    <property type="project" value="UniProtKB-UniRule"/>
</dbReference>
<dbReference type="GO" id="GO:0009089">
    <property type="term" value="P:lysine biosynthetic process via diaminopimelate"/>
    <property type="evidence" value="ECO:0007669"/>
    <property type="project" value="UniProtKB-UniRule"/>
</dbReference>
<dbReference type="FunFam" id="3.10.310.10:FF:000001">
    <property type="entry name" value="Diaminopimelate epimerase"/>
    <property type="match status" value="1"/>
</dbReference>
<dbReference type="FunFam" id="3.10.310.10:FF:000002">
    <property type="entry name" value="Diaminopimelate epimerase"/>
    <property type="match status" value="1"/>
</dbReference>
<dbReference type="Gene3D" id="3.10.310.10">
    <property type="entry name" value="Diaminopimelate Epimerase, Chain A, domain 1"/>
    <property type="match status" value="2"/>
</dbReference>
<dbReference type="HAMAP" id="MF_00197">
    <property type="entry name" value="DAP_epimerase"/>
    <property type="match status" value="1"/>
</dbReference>
<dbReference type="InterPro" id="IPR018510">
    <property type="entry name" value="DAP_epimerase_AS"/>
</dbReference>
<dbReference type="InterPro" id="IPR001653">
    <property type="entry name" value="DAP_epimerase_DapF"/>
</dbReference>
<dbReference type="NCBIfam" id="TIGR00652">
    <property type="entry name" value="DapF"/>
    <property type="match status" value="1"/>
</dbReference>
<dbReference type="PANTHER" id="PTHR31689:SF0">
    <property type="entry name" value="DIAMINOPIMELATE EPIMERASE"/>
    <property type="match status" value="1"/>
</dbReference>
<dbReference type="PANTHER" id="PTHR31689">
    <property type="entry name" value="DIAMINOPIMELATE EPIMERASE, CHLOROPLASTIC"/>
    <property type="match status" value="1"/>
</dbReference>
<dbReference type="Pfam" id="PF01678">
    <property type="entry name" value="DAP_epimerase"/>
    <property type="match status" value="2"/>
</dbReference>
<dbReference type="SUPFAM" id="SSF54506">
    <property type="entry name" value="Diaminopimelate epimerase-like"/>
    <property type="match status" value="1"/>
</dbReference>
<dbReference type="PROSITE" id="PS01326">
    <property type="entry name" value="DAP_EPIMERASE"/>
    <property type="match status" value="1"/>
</dbReference>
<feature type="chain" id="PRO_1000011877" description="Diaminopimelate epimerase">
    <location>
        <begin position="1"/>
        <end position="274"/>
    </location>
</feature>
<feature type="active site" description="Proton donor" evidence="1">
    <location>
        <position position="73"/>
    </location>
</feature>
<feature type="active site" description="Proton acceptor" evidence="1">
    <location>
        <position position="217"/>
    </location>
</feature>
<feature type="binding site" evidence="1">
    <location>
        <position position="11"/>
    </location>
    <ligand>
        <name>substrate</name>
    </ligand>
</feature>
<feature type="binding site" evidence="1">
    <location>
        <position position="44"/>
    </location>
    <ligand>
        <name>substrate</name>
    </ligand>
</feature>
<feature type="binding site" evidence="1">
    <location>
        <position position="64"/>
    </location>
    <ligand>
        <name>substrate</name>
    </ligand>
</feature>
<feature type="binding site" evidence="1">
    <location>
        <begin position="74"/>
        <end position="75"/>
    </location>
    <ligand>
        <name>substrate</name>
    </ligand>
</feature>
<feature type="binding site" evidence="1">
    <location>
        <position position="157"/>
    </location>
    <ligand>
        <name>substrate</name>
    </ligand>
</feature>
<feature type="binding site" evidence="1">
    <location>
        <position position="190"/>
    </location>
    <ligand>
        <name>substrate</name>
    </ligand>
</feature>
<feature type="binding site" evidence="1">
    <location>
        <begin position="208"/>
        <end position="209"/>
    </location>
    <ligand>
        <name>substrate</name>
    </ligand>
</feature>
<feature type="binding site" evidence="1">
    <location>
        <begin position="218"/>
        <end position="219"/>
    </location>
    <ligand>
        <name>substrate</name>
    </ligand>
</feature>
<feature type="site" description="Could be important to modulate the pK values of the two catalytic cysteine residues" evidence="1">
    <location>
        <position position="159"/>
    </location>
</feature>
<feature type="site" description="Could be important to modulate the pK values of the two catalytic cysteine residues" evidence="1">
    <location>
        <position position="208"/>
    </location>
</feature>
<feature type="site" description="Important for dimerization" evidence="1">
    <location>
        <position position="268"/>
    </location>
</feature>
<protein>
    <recommendedName>
        <fullName evidence="1">Diaminopimelate epimerase</fullName>
        <shortName evidence="1">DAP epimerase</shortName>
        <ecNumber evidence="1">5.1.1.7</ecNumber>
    </recommendedName>
    <alternativeName>
        <fullName evidence="1">PLP-independent amino acid racemase</fullName>
    </alternativeName>
</protein>
<proteinExistence type="inferred from homology"/>
<organism>
    <name type="scientific">Cronobacter sakazakii (strain ATCC BAA-894)</name>
    <name type="common">Enterobacter sakazakii</name>
    <dbReference type="NCBI Taxonomy" id="290339"/>
    <lineage>
        <taxon>Bacteria</taxon>
        <taxon>Pseudomonadati</taxon>
        <taxon>Pseudomonadota</taxon>
        <taxon>Gammaproteobacteria</taxon>
        <taxon>Enterobacterales</taxon>
        <taxon>Enterobacteriaceae</taxon>
        <taxon>Cronobacter</taxon>
    </lineage>
</organism>